<accession>Q8W207</accession>
<accession>Q94A24</accession>
<accession>Q9ZVD8</accession>
<reference key="1">
    <citation type="journal article" date="2001" name="EMBO J.">
        <title>Subunit interaction maps for the regulatory particle of the 26S proteasome and the COP9 signalosome.</title>
        <authorList>
            <person name="Fu H."/>
            <person name="Reis N."/>
            <person name="Lee Y."/>
            <person name="Glickman M.H."/>
            <person name="Vierstra R."/>
        </authorList>
    </citation>
    <scope>NUCLEOTIDE SEQUENCE</scope>
</reference>
<reference key="2">
    <citation type="journal article" date="2003" name="Plant Cell">
        <title>Characterization of the last subunit of the Arabidopsis COP9 signalosome: implications for the overall structure and origin of the complex.</title>
        <authorList>
            <person name="Serino G."/>
            <person name="Su H."/>
            <person name="Peng Z."/>
            <person name="Tsuge T."/>
            <person name="Wei N."/>
            <person name="Gu H."/>
            <person name="Deng X.-W."/>
        </authorList>
    </citation>
    <scope>NUCLEOTIDE SEQUENCE</scope>
    <scope>FUNCTION</scope>
    <scope>INTERACTION WITH CUL3A; CSN1 AND CSN4</scope>
</reference>
<reference key="3">
    <citation type="journal article" date="1999" name="Nature">
        <title>Sequence and analysis of chromosome 2 of the plant Arabidopsis thaliana.</title>
        <authorList>
            <person name="Lin X."/>
            <person name="Kaul S."/>
            <person name="Rounsley S.D."/>
            <person name="Shea T.P."/>
            <person name="Benito M.-I."/>
            <person name="Town C.D."/>
            <person name="Fujii C.Y."/>
            <person name="Mason T.M."/>
            <person name="Bowman C.L."/>
            <person name="Barnstead M.E."/>
            <person name="Feldblyum T.V."/>
            <person name="Buell C.R."/>
            <person name="Ketchum K.A."/>
            <person name="Lee J.J."/>
            <person name="Ronning C.M."/>
            <person name="Koo H.L."/>
            <person name="Moffat K.S."/>
            <person name="Cronin L.A."/>
            <person name="Shen M."/>
            <person name="Pai G."/>
            <person name="Van Aken S."/>
            <person name="Umayam L."/>
            <person name="Tallon L.J."/>
            <person name="Gill J.E."/>
            <person name="Adams M.D."/>
            <person name="Carrera A.J."/>
            <person name="Creasy T.H."/>
            <person name="Goodman H.M."/>
            <person name="Somerville C.R."/>
            <person name="Copenhaver G.P."/>
            <person name="Preuss D."/>
            <person name="Nierman W.C."/>
            <person name="White O."/>
            <person name="Eisen J.A."/>
            <person name="Salzberg S.L."/>
            <person name="Fraser C.M."/>
            <person name="Venter J.C."/>
        </authorList>
    </citation>
    <scope>NUCLEOTIDE SEQUENCE [LARGE SCALE GENOMIC DNA]</scope>
    <source>
        <strain>cv. Columbia</strain>
    </source>
</reference>
<reference key="4">
    <citation type="journal article" date="2017" name="Plant J.">
        <title>Araport11: a complete reannotation of the Arabidopsis thaliana reference genome.</title>
        <authorList>
            <person name="Cheng C.Y."/>
            <person name="Krishnakumar V."/>
            <person name="Chan A.P."/>
            <person name="Thibaud-Nissen F."/>
            <person name="Schobel S."/>
            <person name="Town C.D."/>
        </authorList>
    </citation>
    <scope>GENOME REANNOTATION</scope>
    <source>
        <strain>cv. Columbia</strain>
    </source>
</reference>
<reference key="5">
    <citation type="journal article" date="2003" name="Science">
        <title>Empirical analysis of transcriptional activity in the Arabidopsis genome.</title>
        <authorList>
            <person name="Yamada K."/>
            <person name="Lim J."/>
            <person name="Dale J.M."/>
            <person name="Chen H."/>
            <person name="Shinn P."/>
            <person name="Palm C.J."/>
            <person name="Southwick A.M."/>
            <person name="Wu H.C."/>
            <person name="Kim C.J."/>
            <person name="Nguyen M."/>
            <person name="Pham P.K."/>
            <person name="Cheuk R.F."/>
            <person name="Karlin-Newmann G."/>
            <person name="Liu S.X."/>
            <person name="Lam B."/>
            <person name="Sakano H."/>
            <person name="Wu T."/>
            <person name="Yu G."/>
            <person name="Miranda M."/>
            <person name="Quach H.L."/>
            <person name="Tripp M."/>
            <person name="Chang C.H."/>
            <person name="Lee J.M."/>
            <person name="Toriumi M.J."/>
            <person name="Chan M.M."/>
            <person name="Tang C.C."/>
            <person name="Onodera C.S."/>
            <person name="Deng J.M."/>
            <person name="Akiyama K."/>
            <person name="Ansari Y."/>
            <person name="Arakawa T."/>
            <person name="Banh J."/>
            <person name="Banno F."/>
            <person name="Bowser L."/>
            <person name="Brooks S.Y."/>
            <person name="Carninci P."/>
            <person name="Chao Q."/>
            <person name="Choy N."/>
            <person name="Enju A."/>
            <person name="Goldsmith A.D."/>
            <person name="Gurjal M."/>
            <person name="Hansen N.F."/>
            <person name="Hayashizaki Y."/>
            <person name="Johnson-Hopson C."/>
            <person name="Hsuan V.W."/>
            <person name="Iida K."/>
            <person name="Karnes M."/>
            <person name="Khan S."/>
            <person name="Koesema E."/>
            <person name="Ishida J."/>
            <person name="Jiang P.X."/>
            <person name="Jones T."/>
            <person name="Kawai J."/>
            <person name="Kamiya A."/>
            <person name="Meyers C."/>
            <person name="Nakajima M."/>
            <person name="Narusaka M."/>
            <person name="Seki M."/>
            <person name="Sakurai T."/>
            <person name="Satou M."/>
            <person name="Tamse R."/>
            <person name="Vaysberg M."/>
            <person name="Wallender E.K."/>
            <person name="Wong C."/>
            <person name="Yamamura Y."/>
            <person name="Yuan S."/>
            <person name="Shinozaki K."/>
            <person name="Davis R.W."/>
            <person name="Theologis A."/>
            <person name="Ecker J.R."/>
        </authorList>
    </citation>
    <scope>NUCLEOTIDE SEQUENCE [LARGE SCALE MRNA]</scope>
    <source>
        <strain>cv. Columbia</strain>
    </source>
</reference>
<reference key="6">
    <citation type="submission" date="2002-03" db="EMBL/GenBank/DDBJ databases">
        <title>Full-length cDNA from Arabidopsis thaliana.</title>
        <authorList>
            <person name="Brover V.V."/>
            <person name="Troukhan M.E."/>
            <person name="Alexandrov N.A."/>
            <person name="Lu Y.-P."/>
            <person name="Flavell R.B."/>
            <person name="Feldmann K.A."/>
        </authorList>
    </citation>
    <scope>NUCLEOTIDE SEQUENCE [LARGE SCALE MRNA]</scope>
</reference>
<reference key="7">
    <citation type="journal article" date="2001" name="Science">
        <title>Interactions of the COP9 signalosome with the E3 ubiquitin ligase SCF(TIR1) in mediating auxin response.</title>
        <authorList>
            <person name="Schwechheimer C."/>
            <person name="Serino G."/>
            <person name="Callis J."/>
            <person name="Crosby W.L."/>
            <person name="Lyapina S."/>
            <person name="Deshaies R.J."/>
            <person name="Gray W.M."/>
            <person name="Estelle M."/>
            <person name="Deng X.-W."/>
        </authorList>
    </citation>
    <scope>FUNCTION</scope>
    <scope>INTERACTION WITH CUL1</scope>
</reference>
<sequence>MASDADMEDYGFEYSDEEQEEQDVDIENQYYNSKGMVETEPEEALSGFAEVVQMEPEKADWGFKALKQTVKIYYRLGKYKEMMEAYTEMLTYIKSAVTRNYSEKCINNIMDFVSGSASQNTGLLQEFYQTTLKALEEAKNERLWFKTNLKLCNIWFDIGEYRRMTKILKELHKSCQKEDGTDDQKKGSQLLEVYAIEIQIYTETKDNKKLKQLYHKALAIKSAIPHPRIMGIIRECGGKMHMAERQWEEAATDFFEAFKNYDEAGNQRRIQCLKYLVLANMLMESEVNPFDGQEAKPYKNDPEILAMTNLIAAYQRNEIIEFERILKSNRRTIMDDPFIRNYMEDLLKKVRTQVLLKLIKPYTKIGIPFISKELNVPETDVTELLVSLILDSRIDGHIDEMNRYLLRGDSGNGRKLHKAVDKWNSQLKSLSSNITSRVC</sequence>
<feature type="chain" id="PRO_0000120975" description="COP9 signalosome complex subunit 2">
    <location>
        <begin position="1"/>
        <end position="439"/>
    </location>
</feature>
<feature type="domain" description="PCI" evidence="1">
    <location>
        <begin position="243"/>
        <end position="412"/>
    </location>
</feature>
<feature type="region of interest" description="Disordered" evidence="2">
    <location>
        <begin position="1"/>
        <end position="23"/>
    </location>
</feature>
<feature type="sequence conflict" description="In Ref. 2." evidence="5" ref="2">
    <original>N</original>
    <variation>H</variation>
    <location>
        <position position="100"/>
    </location>
</feature>
<feature type="sequence conflict" description="In Ref. 5; AAK91453/AAM91366." evidence="5" ref="5">
    <original>A</original>
    <variation>E</variation>
    <location>
        <position position="251"/>
    </location>
</feature>
<gene>
    <name type="primary">CSN2</name>
    <name type="synonym">FUS12</name>
    <name type="ordered locus">At2g26990</name>
    <name type="ORF">T20P8.4</name>
</gene>
<proteinExistence type="evidence at protein level"/>
<organism>
    <name type="scientific">Arabidopsis thaliana</name>
    <name type="common">Mouse-ear cress</name>
    <dbReference type="NCBI Taxonomy" id="3702"/>
    <lineage>
        <taxon>Eukaryota</taxon>
        <taxon>Viridiplantae</taxon>
        <taxon>Streptophyta</taxon>
        <taxon>Embryophyta</taxon>
        <taxon>Tracheophyta</taxon>
        <taxon>Spermatophyta</taxon>
        <taxon>Magnoliopsida</taxon>
        <taxon>eudicotyledons</taxon>
        <taxon>Gunneridae</taxon>
        <taxon>Pentapetalae</taxon>
        <taxon>rosids</taxon>
        <taxon>malvids</taxon>
        <taxon>Brassicales</taxon>
        <taxon>Brassicaceae</taxon>
        <taxon>Camelineae</taxon>
        <taxon>Arabidopsis</taxon>
    </lineage>
</organism>
<name>CSN2_ARATH</name>
<comment type="function">
    <text evidence="3 4">Component of the COP9 signalosome complex (CSN), a complex involved in various cellular and developmental processes such as photomorphogenesis and auxin and jasmonate responses. The CSN complex is an essential regulator of the ubiquitin (Ubl) conjugation pathway by mediating the deneddylation of the cullin subunits of SCF-type E3 ligase complexes, leading to decrease the Ubl ligase activity of SCF. It is involved in repression of photomorphogenesis in darkness by regulating the activity of COP1-containing Ubl ligase complexes. The complex is also required for degradation of IAA6 by regulating the activity of the Ubl ligase SCF-TIR complex.</text>
</comment>
<comment type="subunit">
    <text evidence="3 4">Component of the CSN complex, probably composed of CSN1, CSN2, CSN3, CSN4, CSN5 (CSN5A or CSN5B), CSN6 (CSN6A or CSN6B), CSN7 and CSN8. In the CSN complex, it probably interacts directly with CSN1 and CSN4. Interacts directly with CUL1 and CUL3A.</text>
</comment>
<comment type="interaction">
    <interactant intactId="EBI-531035">
        <id>Q8W207</id>
    </interactant>
    <interactant intactId="EBI-530996">
        <id>P45432</id>
        <label>CSN1</label>
    </interactant>
    <organismsDiffer>false</organismsDiffer>
    <experiments>4</experiments>
</comment>
<comment type="subcellular location">
    <subcellularLocation>
        <location evidence="5">Cytoplasm</location>
    </subcellularLocation>
    <subcellularLocation>
        <location evidence="5">Nucleus</location>
    </subcellularLocation>
</comment>
<comment type="similarity">
    <text evidence="5">Belongs to the CSN2 family.</text>
</comment>
<keyword id="KW-0963">Cytoplasm</keyword>
<keyword id="KW-0217">Developmental protein</keyword>
<keyword id="KW-0539">Nucleus</keyword>
<keyword id="KW-0607">Phytochrome signaling pathway</keyword>
<keyword id="KW-1185">Reference proteome</keyword>
<keyword id="KW-0736">Signalosome</keyword>
<dbReference type="EMBL" id="AF395058">
    <property type="protein sequence ID" value="AAL58101.1"/>
    <property type="molecule type" value="mRNA"/>
</dbReference>
<dbReference type="EMBL" id="AC005623">
    <property type="protein sequence ID" value="AAC77857.2"/>
    <property type="molecule type" value="Genomic_DNA"/>
</dbReference>
<dbReference type="EMBL" id="CP002685">
    <property type="protein sequence ID" value="AEC07920.1"/>
    <property type="molecule type" value="Genomic_DNA"/>
</dbReference>
<dbReference type="EMBL" id="AY050437">
    <property type="protein sequence ID" value="AAK91453.1"/>
    <property type="molecule type" value="mRNA"/>
</dbReference>
<dbReference type="EMBL" id="AY133536">
    <property type="protein sequence ID" value="AAM91366.1"/>
    <property type="molecule type" value="mRNA"/>
</dbReference>
<dbReference type="EMBL" id="AY087622">
    <property type="protein sequence ID" value="AAM65163.1"/>
    <property type="molecule type" value="mRNA"/>
</dbReference>
<dbReference type="PIR" id="D84667">
    <property type="entry name" value="D84667"/>
</dbReference>
<dbReference type="RefSeq" id="NP_565632.1">
    <property type="nucleotide sequence ID" value="NM_128257.4"/>
</dbReference>
<dbReference type="SMR" id="Q8W207"/>
<dbReference type="BioGRID" id="2593">
    <property type="interactions" value="12"/>
</dbReference>
<dbReference type="FunCoup" id="Q8W207">
    <property type="interactions" value="4829"/>
</dbReference>
<dbReference type="IntAct" id="Q8W207">
    <property type="interactions" value="4"/>
</dbReference>
<dbReference type="STRING" id="3702.Q8W207"/>
<dbReference type="iPTMnet" id="Q8W207"/>
<dbReference type="PaxDb" id="3702-AT2G26990.1"/>
<dbReference type="ProteomicsDB" id="222620"/>
<dbReference type="EnsemblPlants" id="AT2G26990.1">
    <property type="protein sequence ID" value="AT2G26990.1"/>
    <property type="gene ID" value="AT2G26990"/>
</dbReference>
<dbReference type="GeneID" id="817241"/>
<dbReference type="Gramene" id="AT2G26990.1">
    <property type="protein sequence ID" value="AT2G26990.1"/>
    <property type="gene ID" value="AT2G26990"/>
</dbReference>
<dbReference type="KEGG" id="ath:AT2G26990"/>
<dbReference type="Araport" id="AT2G26990"/>
<dbReference type="TAIR" id="AT2G26990">
    <property type="gene designation" value="FUS12"/>
</dbReference>
<dbReference type="eggNOG" id="KOG1464">
    <property type="taxonomic scope" value="Eukaryota"/>
</dbReference>
<dbReference type="HOGENOM" id="CLU_028981_0_0_1"/>
<dbReference type="InParanoid" id="Q8W207"/>
<dbReference type="OMA" id="SEENWKD"/>
<dbReference type="OrthoDB" id="194139at2759"/>
<dbReference type="PhylomeDB" id="Q8W207"/>
<dbReference type="PRO" id="PR:Q8W207"/>
<dbReference type="Proteomes" id="UP000006548">
    <property type="component" value="Chromosome 2"/>
</dbReference>
<dbReference type="ExpressionAtlas" id="Q8W207">
    <property type="expression patterns" value="baseline and differential"/>
</dbReference>
<dbReference type="GO" id="GO:0008180">
    <property type="term" value="C:COP9 signalosome"/>
    <property type="evidence" value="ECO:0007669"/>
    <property type="project" value="UniProtKB-KW"/>
</dbReference>
<dbReference type="GO" id="GO:0005737">
    <property type="term" value="C:cytoplasm"/>
    <property type="evidence" value="ECO:0007669"/>
    <property type="project" value="UniProtKB-SubCell"/>
</dbReference>
<dbReference type="GO" id="GO:0005634">
    <property type="term" value="C:nucleus"/>
    <property type="evidence" value="ECO:0000304"/>
    <property type="project" value="TAIR"/>
</dbReference>
<dbReference type="GO" id="GO:0030163">
    <property type="term" value="P:protein catabolic process"/>
    <property type="evidence" value="ECO:0000304"/>
    <property type="project" value="TAIR"/>
</dbReference>
<dbReference type="GO" id="GO:0000338">
    <property type="term" value="P:protein deneddylation"/>
    <property type="evidence" value="ECO:0000315"/>
    <property type="project" value="TAIR"/>
</dbReference>
<dbReference type="GO" id="GO:0009585">
    <property type="term" value="P:red, far-red light phototransduction"/>
    <property type="evidence" value="ECO:0007669"/>
    <property type="project" value="UniProtKB-KW"/>
</dbReference>
<dbReference type="FunFam" id="1.25.40.570:FF:000011">
    <property type="entry name" value="COP9 signalosome complex subunit 2"/>
    <property type="match status" value="1"/>
</dbReference>
<dbReference type="Gene3D" id="1.25.40.570">
    <property type="match status" value="1"/>
</dbReference>
<dbReference type="InterPro" id="IPR050871">
    <property type="entry name" value="26S_Proteasome/COP9_Components"/>
</dbReference>
<dbReference type="InterPro" id="IPR000717">
    <property type="entry name" value="PCI_dom"/>
</dbReference>
<dbReference type="InterPro" id="IPR036390">
    <property type="entry name" value="WH_DNA-bd_sf"/>
</dbReference>
<dbReference type="PANTHER" id="PTHR10678">
    <property type="entry name" value="26S PROTEASOME NON-ATPASE REGULATORY SUBUNIT 11/COP9 SIGNALOSOME COMPLEX SUBUNIT 2"/>
    <property type="match status" value="1"/>
</dbReference>
<dbReference type="Pfam" id="PF01399">
    <property type="entry name" value="PCI"/>
    <property type="match status" value="1"/>
</dbReference>
<dbReference type="SMART" id="SM00753">
    <property type="entry name" value="PAM"/>
    <property type="match status" value="1"/>
</dbReference>
<dbReference type="SMART" id="SM00088">
    <property type="entry name" value="PINT"/>
    <property type="match status" value="1"/>
</dbReference>
<dbReference type="SUPFAM" id="SSF46785">
    <property type="entry name" value="Winged helix' DNA-binding domain"/>
    <property type="match status" value="1"/>
</dbReference>
<dbReference type="PROSITE" id="PS50250">
    <property type="entry name" value="PCI"/>
    <property type="match status" value="1"/>
</dbReference>
<evidence type="ECO:0000255" key="1">
    <source>
        <dbReference type="PROSITE-ProRule" id="PRU01185"/>
    </source>
</evidence>
<evidence type="ECO:0000256" key="2">
    <source>
        <dbReference type="SAM" id="MobiDB-lite"/>
    </source>
</evidence>
<evidence type="ECO:0000269" key="3">
    <source>
    </source>
</evidence>
<evidence type="ECO:0000269" key="4">
    <source>
    </source>
</evidence>
<evidence type="ECO:0000305" key="5"/>
<protein>
    <recommendedName>
        <fullName>COP9 signalosome complex subunit 2</fullName>
        <shortName>Signalosome subunit 2</shortName>
    </recommendedName>
    <alternativeName>
        <fullName>Protein FUSCA 12</fullName>
    </alternativeName>
</protein>